<comment type="function">
    <text evidence="1">Small subunit of the glutamine-dependent carbamoyl phosphate synthetase (CPSase). CPSase catalyzes the formation of carbamoyl phosphate from the ammonia moiety of glutamine, carbonate, and phosphate donated by ATP, constituting the first step of 2 biosynthetic pathways, one leading to arginine and/or urea and the other to pyrimidine nucleotides. The small subunit (glutamine amidotransferase) binds and cleaves glutamine to supply the large subunit with the substrate ammonia.</text>
</comment>
<comment type="catalytic activity">
    <reaction evidence="1">
        <text>hydrogencarbonate + L-glutamine + 2 ATP + H2O = carbamoyl phosphate + L-glutamate + 2 ADP + phosphate + 2 H(+)</text>
        <dbReference type="Rhea" id="RHEA:18633"/>
        <dbReference type="ChEBI" id="CHEBI:15377"/>
        <dbReference type="ChEBI" id="CHEBI:15378"/>
        <dbReference type="ChEBI" id="CHEBI:17544"/>
        <dbReference type="ChEBI" id="CHEBI:29985"/>
        <dbReference type="ChEBI" id="CHEBI:30616"/>
        <dbReference type="ChEBI" id="CHEBI:43474"/>
        <dbReference type="ChEBI" id="CHEBI:58228"/>
        <dbReference type="ChEBI" id="CHEBI:58359"/>
        <dbReference type="ChEBI" id="CHEBI:456216"/>
        <dbReference type="EC" id="6.3.5.5"/>
    </reaction>
</comment>
<comment type="catalytic activity">
    <molecule>Carbamoyl phosphate synthase small chain</molecule>
    <reaction evidence="1">
        <text>L-glutamine + H2O = L-glutamate + NH4(+)</text>
        <dbReference type="Rhea" id="RHEA:15889"/>
        <dbReference type="ChEBI" id="CHEBI:15377"/>
        <dbReference type="ChEBI" id="CHEBI:28938"/>
        <dbReference type="ChEBI" id="CHEBI:29985"/>
        <dbReference type="ChEBI" id="CHEBI:58359"/>
    </reaction>
</comment>
<comment type="pathway">
    <text evidence="1">Amino-acid biosynthesis; L-arginine biosynthesis; carbamoyl phosphate from bicarbonate: step 1/1.</text>
</comment>
<comment type="pathway">
    <text evidence="1">Pyrimidine metabolism; UMP biosynthesis via de novo pathway; (S)-dihydroorotate from bicarbonate: step 1/3.</text>
</comment>
<comment type="subunit">
    <text evidence="1">Composed of two chains; the small (or glutamine) chain promotes the hydrolysis of glutamine to ammonia, which is used by the large (or ammonia) chain to synthesize carbamoyl phosphate. Tetramer of heterodimers (alpha,beta)4.</text>
</comment>
<comment type="similarity">
    <text evidence="1">Belongs to the CarA family.</text>
</comment>
<gene>
    <name evidence="1" type="primary">carA</name>
    <name type="ordered locus">CT0066</name>
</gene>
<sequence length="366" mass="40111">MQEIPAILVLENGSVYRGTAFGHAGEATGEVVFNTSLTGYQEILTDPSYTGQMVVMTYPLIGNYGITPNDNESKKIWASALIVREASNVYSNYESTRSLDATLKEAGVMGLAGIDTRKLVREIRQKGAMRAVISTLCDDVAALKAQAAAIPEMTGLDLVQRVTTGERYTVDNPDAKYHVVAFDYGIKTNIIRQLNAEGCKVTVVNAKTTADEVLAMNPDGIFLSNGPGDPFAVTYAIDTIRELAARNSTLPIFGICLGHQLLSLAFGAKTYKLKFGHHGANHPVKNLLSNTIEITSQNHGFAVEMESLPGELELTHKNLYDMTVEGIRHRELPCFSVQYHPEAAPGPHDSHYLFKEFTELMERLKN</sequence>
<evidence type="ECO:0000255" key="1">
    <source>
        <dbReference type="HAMAP-Rule" id="MF_01209"/>
    </source>
</evidence>
<reference key="1">
    <citation type="journal article" date="2002" name="Proc. Natl. Acad. Sci. U.S.A.">
        <title>The complete genome sequence of Chlorobium tepidum TLS, a photosynthetic, anaerobic, green-sulfur bacterium.</title>
        <authorList>
            <person name="Eisen J.A."/>
            <person name="Nelson K.E."/>
            <person name="Paulsen I.T."/>
            <person name="Heidelberg J.F."/>
            <person name="Wu M."/>
            <person name="Dodson R.J."/>
            <person name="DeBoy R.T."/>
            <person name="Gwinn M.L."/>
            <person name="Nelson W.C."/>
            <person name="Haft D.H."/>
            <person name="Hickey E.K."/>
            <person name="Peterson J.D."/>
            <person name="Durkin A.S."/>
            <person name="Kolonay J.F."/>
            <person name="Yang F."/>
            <person name="Holt I.E."/>
            <person name="Umayam L.A."/>
            <person name="Mason T.M."/>
            <person name="Brenner M."/>
            <person name="Shea T.P."/>
            <person name="Parksey D.S."/>
            <person name="Nierman W.C."/>
            <person name="Feldblyum T.V."/>
            <person name="Hansen C.L."/>
            <person name="Craven M.B."/>
            <person name="Radune D."/>
            <person name="Vamathevan J.J."/>
            <person name="Khouri H.M."/>
            <person name="White O."/>
            <person name="Gruber T.M."/>
            <person name="Ketchum K.A."/>
            <person name="Venter J.C."/>
            <person name="Tettelin H."/>
            <person name="Bryant D.A."/>
            <person name="Fraser C.M."/>
        </authorList>
    </citation>
    <scope>NUCLEOTIDE SEQUENCE [LARGE SCALE GENOMIC DNA]</scope>
    <source>
        <strain>ATCC 49652 / DSM 12025 / NBRC 103806 / TLS</strain>
    </source>
</reference>
<name>CARA_CHLTE</name>
<proteinExistence type="inferred from homology"/>
<keyword id="KW-0028">Amino-acid biosynthesis</keyword>
<keyword id="KW-0055">Arginine biosynthesis</keyword>
<keyword id="KW-0067">ATP-binding</keyword>
<keyword id="KW-0315">Glutamine amidotransferase</keyword>
<keyword id="KW-0436">Ligase</keyword>
<keyword id="KW-0547">Nucleotide-binding</keyword>
<keyword id="KW-0665">Pyrimidine biosynthesis</keyword>
<keyword id="KW-1185">Reference proteome</keyword>
<organism>
    <name type="scientific">Chlorobaculum tepidum (strain ATCC 49652 / DSM 12025 / NBRC 103806 / TLS)</name>
    <name type="common">Chlorobium tepidum</name>
    <dbReference type="NCBI Taxonomy" id="194439"/>
    <lineage>
        <taxon>Bacteria</taxon>
        <taxon>Pseudomonadati</taxon>
        <taxon>Chlorobiota</taxon>
        <taxon>Chlorobiia</taxon>
        <taxon>Chlorobiales</taxon>
        <taxon>Chlorobiaceae</taxon>
        <taxon>Chlorobaculum</taxon>
    </lineage>
</organism>
<dbReference type="EC" id="6.3.5.5" evidence="1"/>
<dbReference type="EMBL" id="AE006470">
    <property type="protein sequence ID" value="AAM71314.1"/>
    <property type="molecule type" value="Genomic_DNA"/>
</dbReference>
<dbReference type="RefSeq" id="NP_660972.1">
    <property type="nucleotide sequence ID" value="NC_002932.3"/>
</dbReference>
<dbReference type="RefSeq" id="WP_010931760.1">
    <property type="nucleotide sequence ID" value="NC_002932.3"/>
</dbReference>
<dbReference type="SMR" id="Q8KGA2"/>
<dbReference type="STRING" id="194439.CT0066"/>
<dbReference type="MEROPS" id="C26.A04"/>
<dbReference type="EnsemblBacteria" id="AAM71314">
    <property type="protein sequence ID" value="AAM71314"/>
    <property type="gene ID" value="CT0066"/>
</dbReference>
<dbReference type="KEGG" id="cte:CT0066"/>
<dbReference type="PATRIC" id="fig|194439.7.peg.67"/>
<dbReference type="eggNOG" id="COG0505">
    <property type="taxonomic scope" value="Bacteria"/>
</dbReference>
<dbReference type="HOGENOM" id="CLU_035901_2_1_10"/>
<dbReference type="OrthoDB" id="9804328at2"/>
<dbReference type="UniPathway" id="UPA00068">
    <property type="reaction ID" value="UER00171"/>
</dbReference>
<dbReference type="UniPathway" id="UPA00070">
    <property type="reaction ID" value="UER00115"/>
</dbReference>
<dbReference type="Proteomes" id="UP000001007">
    <property type="component" value="Chromosome"/>
</dbReference>
<dbReference type="GO" id="GO:0005524">
    <property type="term" value="F:ATP binding"/>
    <property type="evidence" value="ECO:0007669"/>
    <property type="project" value="UniProtKB-UniRule"/>
</dbReference>
<dbReference type="GO" id="GO:0004088">
    <property type="term" value="F:carbamoyl-phosphate synthase (glutamine-hydrolyzing) activity"/>
    <property type="evidence" value="ECO:0007669"/>
    <property type="project" value="UniProtKB-UniRule"/>
</dbReference>
<dbReference type="GO" id="GO:0004359">
    <property type="term" value="F:glutaminase activity"/>
    <property type="evidence" value="ECO:0007669"/>
    <property type="project" value="RHEA"/>
</dbReference>
<dbReference type="GO" id="GO:0006207">
    <property type="term" value="P:'de novo' pyrimidine nucleobase biosynthetic process"/>
    <property type="evidence" value="ECO:0007669"/>
    <property type="project" value="InterPro"/>
</dbReference>
<dbReference type="GO" id="GO:0044205">
    <property type="term" value="P:'de novo' UMP biosynthetic process"/>
    <property type="evidence" value="ECO:0007669"/>
    <property type="project" value="UniProtKB-UniRule"/>
</dbReference>
<dbReference type="GO" id="GO:0006541">
    <property type="term" value="P:glutamine metabolic process"/>
    <property type="evidence" value="ECO:0007669"/>
    <property type="project" value="InterPro"/>
</dbReference>
<dbReference type="GO" id="GO:0006526">
    <property type="term" value="P:L-arginine biosynthetic process"/>
    <property type="evidence" value="ECO:0007669"/>
    <property type="project" value="UniProtKB-UniRule"/>
</dbReference>
<dbReference type="CDD" id="cd01744">
    <property type="entry name" value="GATase1_CPSase"/>
    <property type="match status" value="1"/>
</dbReference>
<dbReference type="FunFam" id="3.50.30.20:FF:000001">
    <property type="entry name" value="Carbamoyl-phosphate synthase small chain"/>
    <property type="match status" value="1"/>
</dbReference>
<dbReference type="Gene3D" id="3.40.50.880">
    <property type="match status" value="1"/>
</dbReference>
<dbReference type="Gene3D" id="3.50.30.20">
    <property type="entry name" value="Carbamoyl-phosphate synthase small subunit, N-terminal domain"/>
    <property type="match status" value="1"/>
</dbReference>
<dbReference type="HAMAP" id="MF_01209">
    <property type="entry name" value="CPSase_S_chain"/>
    <property type="match status" value="1"/>
</dbReference>
<dbReference type="InterPro" id="IPR050472">
    <property type="entry name" value="Anth_synth/Amidotransfase"/>
</dbReference>
<dbReference type="InterPro" id="IPR006274">
    <property type="entry name" value="CarbamoylP_synth_ssu"/>
</dbReference>
<dbReference type="InterPro" id="IPR002474">
    <property type="entry name" value="CarbamoylP_synth_ssu_N"/>
</dbReference>
<dbReference type="InterPro" id="IPR036480">
    <property type="entry name" value="CarbP_synth_ssu_N_sf"/>
</dbReference>
<dbReference type="InterPro" id="IPR029062">
    <property type="entry name" value="Class_I_gatase-like"/>
</dbReference>
<dbReference type="InterPro" id="IPR035686">
    <property type="entry name" value="CPSase_GATase1"/>
</dbReference>
<dbReference type="InterPro" id="IPR017926">
    <property type="entry name" value="GATASE"/>
</dbReference>
<dbReference type="NCBIfam" id="TIGR01368">
    <property type="entry name" value="CPSaseIIsmall"/>
    <property type="match status" value="1"/>
</dbReference>
<dbReference type="NCBIfam" id="NF009475">
    <property type="entry name" value="PRK12838.1"/>
    <property type="match status" value="1"/>
</dbReference>
<dbReference type="PANTHER" id="PTHR43418:SF7">
    <property type="entry name" value="CARBAMOYL-PHOSPHATE SYNTHASE SMALL CHAIN"/>
    <property type="match status" value="1"/>
</dbReference>
<dbReference type="PANTHER" id="PTHR43418">
    <property type="entry name" value="MULTIFUNCTIONAL TRYPTOPHAN BIOSYNTHESIS PROTEIN-RELATED"/>
    <property type="match status" value="1"/>
</dbReference>
<dbReference type="Pfam" id="PF00988">
    <property type="entry name" value="CPSase_sm_chain"/>
    <property type="match status" value="1"/>
</dbReference>
<dbReference type="Pfam" id="PF00117">
    <property type="entry name" value="GATase"/>
    <property type="match status" value="1"/>
</dbReference>
<dbReference type="PRINTS" id="PR00097">
    <property type="entry name" value="ANTSNTHASEII"/>
</dbReference>
<dbReference type="PRINTS" id="PR00099">
    <property type="entry name" value="CPSGATASE"/>
</dbReference>
<dbReference type="PRINTS" id="PR00096">
    <property type="entry name" value="GATASE"/>
</dbReference>
<dbReference type="SMART" id="SM01097">
    <property type="entry name" value="CPSase_sm_chain"/>
    <property type="match status" value="1"/>
</dbReference>
<dbReference type="SUPFAM" id="SSF52021">
    <property type="entry name" value="Carbamoyl phosphate synthetase, small subunit N-terminal domain"/>
    <property type="match status" value="1"/>
</dbReference>
<dbReference type="SUPFAM" id="SSF52317">
    <property type="entry name" value="Class I glutamine amidotransferase-like"/>
    <property type="match status" value="1"/>
</dbReference>
<dbReference type="PROSITE" id="PS51273">
    <property type="entry name" value="GATASE_TYPE_1"/>
    <property type="match status" value="1"/>
</dbReference>
<feature type="chain" id="PRO_0000112266" description="Carbamoyl phosphate synthase small chain">
    <location>
        <begin position="1"/>
        <end position="366"/>
    </location>
</feature>
<feature type="domain" description="Glutamine amidotransferase type-1" evidence="1">
    <location>
        <begin position="178"/>
        <end position="366"/>
    </location>
</feature>
<feature type="region of interest" description="CPSase" evidence="1">
    <location>
        <begin position="1"/>
        <end position="174"/>
    </location>
</feature>
<feature type="active site" description="Nucleophile" evidence="1">
    <location>
        <position position="256"/>
    </location>
</feature>
<feature type="active site" evidence="1">
    <location>
        <position position="340"/>
    </location>
</feature>
<feature type="active site" evidence="1">
    <location>
        <position position="342"/>
    </location>
</feature>
<feature type="binding site" evidence="1">
    <location>
        <position position="48"/>
    </location>
    <ligand>
        <name>L-glutamine</name>
        <dbReference type="ChEBI" id="CHEBI:58359"/>
    </ligand>
</feature>
<feature type="binding site" evidence="1">
    <location>
        <position position="226"/>
    </location>
    <ligand>
        <name>L-glutamine</name>
        <dbReference type="ChEBI" id="CHEBI:58359"/>
    </ligand>
</feature>
<feature type="binding site" evidence="1">
    <location>
        <position position="228"/>
    </location>
    <ligand>
        <name>L-glutamine</name>
        <dbReference type="ChEBI" id="CHEBI:58359"/>
    </ligand>
</feature>
<feature type="binding site" evidence="1">
    <location>
        <position position="257"/>
    </location>
    <ligand>
        <name>L-glutamine</name>
        <dbReference type="ChEBI" id="CHEBI:58359"/>
    </ligand>
</feature>
<feature type="binding site" evidence="1">
    <location>
        <position position="260"/>
    </location>
    <ligand>
        <name>L-glutamine</name>
        <dbReference type="ChEBI" id="CHEBI:58359"/>
    </ligand>
</feature>
<feature type="binding site" evidence="1">
    <location>
        <position position="298"/>
    </location>
    <ligand>
        <name>L-glutamine</name>
        <dbReference type="ChEBI" id="CHEBI:58359"/>
    </ligand>
</feature>
<feature type="binding site" evidence="1">
    <location>
        <position position="300"/>
    </location>
    <ligand>
        <name>L-glutamine</name>
        <dbReference type="ChEBI" id="CHEBI:58359"/>
    </ligand>
</feature>
<feature type="binding site" evidence="1">
    <location>
        <position position="301"/>
    </location>
    <ligand>
        <name>L-glutamine</name>
        <dbReference type="ChEBI" id="CHEBI:58359"/>
    </ligand>
</feature>
<protein>
    <recommendedName>
        <fullName evidence="1">Carbamoyl phosphate synthase small chain</fullName>
        <ecNumber evidence="1">6.3.5.5</ecNumber>
    </recommendedName>
    <alternativeName>
        <fullName evidence="1">Carbamoyl phosphate synthetase glutamine chain</fullName>
    </alternativeName>
</protein>
<accession>Q8KGA2</accession>